<dbReference type="EC" id="4.1.2.42"/>
<dbReference type="EMBL" id="AB010956">
    <property type="protein sequence ID" value="BAA31547.1"/>
    <property type="molecule type" value="Genomic_DNA"/>
</dbReference>
<dbReference type="SMR" id="O82872"/>
<dbReference type="KEGG" id="ag:BAA31547"/>
<dbReference type="BRENDA" id="4.1.2.42">
    <property type="organism ID" value="457"/>
</dbReference>
<dbReference type="GO" id="GO:0016832">
    <property type="term" value="F:aldehyde-lyase activity"/>
    <property type="evidence" value="ECO:0000314"/>
    <property type="project" value="UniProtKB"/>
</dbReference>
<dbReference type="GO" id="GO:0008721">
    <property type="term" value="F:D-serine ammonia-lyase activity"/>
    <property type="evidence" value="ECO:0007669"/>
    <property type="project" value="TreeGrafter"/>
</dbReference>
<dbReference type="GO" id="GO:0043876">
    <property type="term" value="F:D-threonine aldolase activity"/>
    <property type="evidence" value="ECO:0007669"/>
    <property type="project" value="UniProtKB-EC"/>
</dbReference>
<dbReference type="GO" id="GO:0019478">
    <property type="term" value="P:D-amino acid catabolic process"/>
    <property type="evidence" value="ECO:0000314"/>
    <property type="project" value="UniProtKB"/>
</dbReference>
<dbReference type="GO" id="GO:0036088">
    <property type="term" value="P:D-serine catabolic process"/>
    <property type="evidence" value="ECO:0007669"/>
    <property type="project" value="TreeGrafter"/>
</dbReference>
<dbReference type="CDD" id="cd06819">
    <property type="entry name" value="PLPDE_III_LS_D-TA"/>
    <property type="match status" value="1"/>
</dbReference>
<dbReference type="FunFam" id="3.20.20.10:FF:000026">
    <property type="entry name" value="D-threonine aldolase"/>
    <property type="match status" value="1"/>
</dbReference>
<dbReference type="Gene3D" id="3.20.20.10">
    <property type="entry name" value="Alanine racemase"/>
    <property type="match status" value="1"/>
</dbReference>
<dbReference type="Gene3D" id="2.40.37.20">
    <property type="entry name" value="D-serine dehydratase-like domain"/>
    <property type="match status" value="1"/>
</dbReference>
<dbReference type="InterPro" id="IPR001608">
    <property type="entry name" value="Ala_racemase_N"/>
</dbReference>
<dbReference type="InterPro" id="IPR051466">
    <property type="entry name" value="D-amino_acid_metab_enzyme"/>
</dbReference>
<dbReference type="InterPro" id="IPR026956">
    <property type="entry name" value="D-ser_dehydrat-like_dom"/>
</dbReference>
<dbReference type="InterPro" id="IPR042208">
    <property type="entry name" value="D-ser_dehydrat-like_sf"/>
</dbReference>
<dbReference type="InterPro" id="IPR029066">
    <property type="entry name" value="PLP-binding_barrel"/>
</dbReference>
<dbReference type="PANTHER" id="PTHR28004:SF2">
    <property type="entry name" value="D-SERINE DEHYDRATASE"/>
    <property type="match status" value="1"/>
</dbReference>
<dbReference type="PANTHER" id="PTHR28004">
    <property type="entry name" value="ZGC:162816-RELATED"/>
    <property type="match status" value="1"/>
</dbReference>
<dbReference type="Pfam" id="PF01168">
    <property type="entry name" value="Ala_racemase_N"/>
    <property type="match status" value="1"/>
</dbReference>
<dbReference type="Pfam" id="PF14031">
    <property type="entry name" value="D-ser_dehydrat"/>
    <property type="match status" value="1"/>
</dbReference>
<dbReference type="SMART" id="SM01119">
    <property type="entry name" value="D-ser_dehydrat"/>
    <property type="match status" value="1"/>
</dbReference>
<dbReference type="SUPFAM" id="SSF51419">
    <property type="entry name" value="PLP-binding barrel"/>
    <property type="match status" value="1"/>
</dbReference>
<sequence length="379" mass="40031">MSQEVIRGIALPPPAQPGDPLARVDTPSLVLDLAPFEANLRAMQAWADRHDVALRPHAKAHKCPEIALRQLALGARGICCQKVSEALPFVAAGIQDIHISNEVVGPAKLALLGQLARVAKISVCVDNAHNLSQVSQAMVQAGAQIDVLVEVDVGQGRCGVSDDALVLALAQQARDLPGVNFAGLQAYHGSVQHYRTREERAEVCRQAARIAASYAQLLRESGIACDTITGGGTGSAEFDAASGVYTELQAGSYAFMDGDYGANEWDGPLAFENSLFVLATVMSKPAPDRVILDAGLKSTTAECGPPAIFGEPGLTYTAINDEHGVVRVEPGAQAPDLGAVLRLVPSHVDPTFNLHDGLVVVRDGVVEDIWEISARGFSR</sequence>
<reference evidence="5 6" key="1">
    <citation type="journal article" date="1998" name="J. Biol. Chem.">
        <title>A novel metal-activated pyridoxal enzyme with a unique primary structure, low specificity D-threonine aldolase from Arthrobacter sp. Strain DK-38. Molecular cloning and cofactor characterization.</title>
        <authorList>
            <person name="Liu J.-Q."/>
            <person name="Dairi T."/>
            <person name="Itoh N."/>
            <person name="Kataoka M."/>
            <person name="Shimizu S."/>
            <person name="Yamada H."/>
        </authorList>
    </citation>
    <scope>NUCLEOTIDE SEQUENCE [GENOMIC DNA]</scope>
    <scope>PROTEIN SEQUENCE OF 50-62</scope>
    <scope>FUNCTION</scope>
    <scope>CATALYTIC ACTIVITY</scope>
    <scope>COFACTOR</scope>
    <scope>BIOPHYSICOCHEMICAL PROPERTIES</scope>
    <source>
        <strain evidence="6">DK-38</strain>
    </source>
</reference>
<reference evidence="5" key="2">
    <citation type="journal article" date="1997" name="Eur. J. Biochem.">
        <title>Isolation and characterization of D-threonine aldolase, a pyridoxal-5'-phosphate-dependent enzyme from Arthrobacter sp. DK-38.</title>
        <authorList>
            <person name="Kataoka M."/>
            <person name="Ikemi M."/>
            <person name="Morikawa T."/>
            <person name="Miyoshi T."/>
            <person name="Nishi K."/>
            <person name="Wada M."/>
            <person name="Yamada H."/>
            <person name="Shimizu S."/>
        </authorList>
    </citation>
    <scope>PROTEIN SEQUENCE OF 2-21</scope>
    <scope>FUNCTION</scope>
    <scope>CATALYTIC ACTIVITY</scope>
    <scope>COFACTOR</scope>
    <scope>ACTIVITY REGULATION</scope>
    <scope>BIOPHYSICOCHEMICAL PROPERTIES</scope>
    <source>
        <strain evidence="1">DK-38</strain>
    </source>
</reference>
<protein>
    <recommendedName>
        <fullName evidence="3 4">D-threonine aldolase</fullName>
        <ecNumber>4.1.2.42</ecNumber>
    </recommendedName>
</protein>
<comment type="function">
    <text evidence="1 2">Catalyzes the reversible cleavage of D-threonine or D-allothreonine into glycine and acetaldehyde. Can also cleave D-beta-phenylserine, D-beta-hydroxy-alpha-aminovaleric acid, D-beta-3,4-dihydroxyphenylserine and D-beta-3,4-methylenedioxyphenylserine into glycine and the corresponding aldehyde compounds. Inactive towards D-serine, beta-hydroxyaspartate and O-phospho-DL-threonine.</text>
</comment>
<comment type="catalytic activity">
    <reaction evidence="1 2">
        <text>D-threonine = acetaldehyde + glycine</text>
        <dbReference type="Rhea" id="RHEA:15257"/>
        <dbReference type="ChEBI" id="CHEBI:15343"/>
        <dbReference type="ChEBI" id="CHEBI:57305"/>
        <dbReference type="ChEBI" id="CHEBI:57757"/>
        <dbReference type="EC" id="4.1.2.42"/>
    </reaction>
</comment>
<comment type="catalytic activity">
    <reaction evidence="1 2">
        <text>D-allo-threonine = acetaldehyde + glycine</text>
        <dbReference type="Rhea" id="RHEA:20073"/>
        <dbReference type="ChEBI" id="CHEBI:15343"/>
        <dbReference type="ChEBI" id="CHEBI:57305"/>
        <dbReference type="ChEBI" id="CHEBI:58645"/>
        <dbReference type="EC" id="4.1.2.42"/>
    </reaction>
</comment>
<comment type="cofactor">
    <cofactor evidence="1 2">
        <name>pyridoxal 5'-phosphate</name>
        <dbReference type="ChEBI" id="CHEBI:597326"/>
    </cofactor>
    <text evidence="1 2">Binds 1 pyridoxal phosphate per subunit.</text>
</comment>
<comment type="cofactor">
    <cofactor evidence="1 2">
        <name>Mn(2+)</name>
        <dbReference type="ChEBI" id="CHEBI:29035"/>
    </cofactor>
    <cofactor evidence="1 2">
        <name>Co(2+)</name>
        <dbReference type="ChEBI" id="CHEBI:48828"/>
    </cofactor>
    <cofactor evidence="1 2">
        <name>Ni(2+)</name>
        <dbReference type="ChEBI" id="CHEBI:49786"/>
    </cofactor>
    <cofactor evidence="1 2">
        <name>Mg(2+)</name>
        <dbReference type="ChEBI" id="CHEBI:18420"/>
    </cofactor>
    <text evidence="1 2">Binds 1 Mn(2+) ion per subunit. Can also use Co(2+), Ni(2+) and Mg(2+).</text>
</comment>
<comment type="activity regulation">
    <text evidence="1">Inhibited by the carbonyl reagents hydroxylamine, phenylhydrazine and semicarbazide. Inhibited by the chelating agent EDTA. Inhibited by the sulfhydryl reagent p-chloromercuribenzoic acid, and by sodium cyanide. Inhibited by iodoacetate, Ag(2)SO(4), HgCl(2) and CdCl(2). Competitively inhibited by beta-hydroxyaspartate and O-phospho-DL-threonine.</text>
</comment>
<comment type="biophysicochemical properties">
    <kinetics>
        <KM evidence="1 2">3.81 mM for D-threonine (at pH 7.5, in the presence of 0.5 mM MnCl(2))</KM>
        <KM evidence="1 2">14 mM for D-allothreonine (at pH 7.5, in the presence of 0.5 mM MnCl(2))</KM>
        <KM evidence="1 2">1.75 mM for D-threo-beta-hydroxy-alpha-aminovaleric acid (at pH 7.5, in the presence of 0.5 mM MnCl(2))</KM>
        <KM evidence="1 2">46.8 mM for D-threo-beta-phenylserine (at pH 7.5, in the presence of 0.5 mM MnCl(2))</KM>
        <KM evidence="1 2">8.4 mM for D-threonine (at pH 8.0, in the presence of 0.1 uM MnCl(2))</KM>
        <KM evidence="1 2">8.8 mM for D-threonine (at pH 8.0, in the absence of MnCl(2))</KM>
        <KM evidence="1 2">4.4 mM for D-allothreonine (at pH 8.0, in the presence of 0.1 uM MnCl(2))</KM>
        <KM evidence="1 2">4.3 mM for D-allothreonine (at pH 8.0, in the absence of MnCl(2))</KM>
        <KM evidence="1 2">5.4 mM for DL-threo-phenylserine (at pH 8.0, in the presence of 0.1 uM MnCl(2))</KM>
        <KM evidence="1 2">5.9 mM for DL-threo-phenylserine (at pH 8.0, in the absence of MnCl(2))</KM>
        <KM evidence="1 2">5.3 mM for DL-erythro-phenylserine (at pH 8.0, in the presence of 0.1 uM MnCl(2))</KM>
        <KM evidence="1 2">4.9 mM for DL-erythro-phenylserine (at pH 8.0, in the absence of MnCl(2))</KM>
        <KM evidence="1 2">1.8 mM for DL-threo-beta-3,4-methylenedioxyphenylserine (at pH 8.0, in the presence of 0.1 uM MnCl(2))</KM>
        <KM evidence="1 2">1.8 mM for DL-threo-beta-3,4-methylenedioxyphenylserine (at pH 8.0, in the absence of MnCl(2))</KM>
        <KM evidence="1 2">2.5 mM for DL-erythro-beta-3,4-methylenedioxyphenylserine (at pH 8.0, in the presence of 0.1 uM MnCl(2))</KM>
        <KM evidence="1 2">2 mM for DL-erythro-beta-3,4-methylenedioxyphenylserine (at pH 8.0, in the absence of MnCl(2))</KM>
        <KM evidence="1 2">1.2 mM for DL-threo-beta-3,4-dihydroxyphenylserine (at pH 8.0, in the presence of 0.1 uM MnCl(2))</KM>
        <KM evidence="1 2">1.4 mM for DL-threo-beta-3,4-dihydroxyphenylserine (at pH 8.0, in the absence of MnCl(2))</KM>
        <Vmax evidence="1 2">38.8 umol/min/mg enzyme with D-threonine as substrate (at pH 7.5, in the presence of 0.5 mM MnCl(2))</Vmax>
        <Vmax evidence="1 2">102.0 umol/min/mg enzyme with D-allothreonine as substrate (at pH 7.5, in the presence of 0.5 mM MnCl(2))</Vmax>
        <Vmax evidence="1 2">9.01 umol/min/mg enzyme with D-threo-beta-hydroxy-alpha-aminovaleric acid as substrate (at pH 7.5, in the presence of 0.5 mM MnCl(2))</Vmax>
        <Vmax evidence="1 2">59.9 umol/min/mg enzyme with D-threo-beta-phenylserine as substrate (at pH 7.5, in the presence of 0.5 mM MnCl(2))</Vmax>
        <Vmax evidence="1 2">32.1 umol/min/mg enzyme with D-threonine as substrate (at pH 8.0, in the presence of 0.1 uM MnCl(2))</Vmax>
        <Vmax evidence="1 2">3.0 umol/min/mg enzyme with D-threonine as substrate (at pH 8.0, in absence of MnCl(2))</Vmax>
        <Vmax evidence="1 2">34.9 umol/min/mg enzyme with D-allothreonine as substrate (at pH 8.0, in the presence of 0.1 uM MnCl(2))</Vmax>
        <Vmax evidence="1 2">2.8 umol/min/mg enzyme with D-allothreonine as substrate (at pH 8.0, in absence of MnCl(2))</Vmax>
        <Vmax evidence="1 2">209.8 umol/min/mg enzyme with DL-threo-phenylserine as substrate (at pH 8.0, in the presence of 0.1 uM MnCl(2))</Vmax>
        <Vmax evidence="1 2">4.9 umol/min/mg enzyme with DL-threo-phenylserine as substrate (at pH 8.0, in absence of MnCl(2))</Vmax>
        <Vmax evidence="1 2">164.4 umol/min/mg enzyme with DL-erythro-phenylserine as substrate (at pH 8.0, in the presence of 0.1 uM MnCl(2))</Vmax>
        <Vmax evidence="1 2">1.9 umol/min/mg enzyme with DL-erythro-phenylserine as substrate (at pH 8.0, in absence of MnCl(2))</Vmax>
        <Vmax evidence="1 2">129.3 umol/min/mg enzyme with DL-threo-beta-3,4-methylenedioxyphenylserine as substrate (at pH 8.0, in the presence of 0.1 uM MnCl(2))</Vmax>
        <Vmax evidence="1 2">9.2 umol/min/mg enzyme with DL-threo-beta-3,4-methylenedioxyphenylserine as substrate (at pH 8.0, in absence of MnCl(2))</Vmax>
        <Vmax evidence="1 2">16.0 umol/min/mg enzyme with DL-erythro-beta-3,4-methylenedioxyphenylserine as substrate (at pH 8.0, in the presence of 0.1 uM MnCl(2))</Vmax>
        <Vmax evidence="1 2">1.9 umol/min/mg enzyme with DL-erythro-beta-3,4-methylenedioxyphenylserine as substrate (at pH 8.0, in absence of MnCl(2))</Vmax>
        <Vmax evidence="1 2">84.6 umol/min/mg enzyme with DL-threo-beta-3,4-dihydroxyphenylserine as substrate (at pH 8.0, in the presence of 0.1 uM MnCl(2))</Vmax>
        <Vmax evidence="1 2">8.4 umol/min/mg enzyme with DL-threo-beta-3,4-dihydroxyphenylserine as substrate (at pH 8.0, in absence of MnCl(2))</Vmax>
    </kinetics>
    <phDependence>
        <text evidence="1 2">Optimum pH is 8.0-9.0. Stable between pH 7.0 and 8.5.</text>
    </phDependence>
    <temperatureDependence>
        <text evidence="1 2">Stable below 55 degrees Celsius.</text>
    </temperatureDependence>
</comment>
<comment type="similarity">
    <text evidence="5">Belongs to the DSD1 family.</text>
</comment>
<name>DTA_ARTSP</name>
<organism>
    <name type="scientific">Arthrobacter sp</name>
    <dbReference type="NCBI Taxonomy" id="1667"/>
    <lineage>
        <taxon>Bacteria</taxon>
        <taxon>Bacillati</taxon>
        <taxon>Actinomycetota</taxon>
        <taxon>Actinomycetes</taxon>
        <taxon>Micrococcales</taxon>
        <taxon>Micrococcaceae</taxon>
        <taxon>Arthrobacter</taxon>
    </lineage>
</organism>
<proteinExistence type="evidence at protein level"/>
<evidence type="ECO:0000269" key="1">
    <source>
    </source>
</evidence>
<evidence type="ECO:0000269" key="2">
    <source>
    </source>
</evidence>
<evidence type="ECO:0000303" key="3">
    <source>
    </source>
</evidence>
<evidence type="ECO:0000303" key="4">
    <source>
    </source>
</evidence>
<evidence type="ECO:0000305" key="5"/>
<evidence type="ECO:0000312" key="6">
    <source>
        <dbReference type="EMBL" id="BAA31547.1"/>
    </source>
</evidence>
<accession>O82872</accession>
<keyword id="KW-0903">Direct protein sequencing</keyword>
<keyword id="KW-0456">Lyase</keyword>
<keyword id="KW-0663">Pyridoxal phosphate</keyword>
<feature type="initiator methionine" description="Removed" evidence="1">
    <location>
        <position position="1"/>
    </location>
</feature>
<feature type="chain" id="PRO_0000403997" description="D-threonine aldolase" evidence="1">
    <location>
        <begin position="2"/>
        <end position="379"/>
    </location>
</feature>
<feature type="modified residue" description="N6-(pyridoxal phosphate)lysine">
    <location>
        <position position="59"/>
    </location>
</feature>